<proteinExistence type="inferred from homology"/>
<comment type="function">
    <text evidence="1">Involved in the binding of tRNA to the ribosomes.</text>
</comment>
<comment type="subunit">
    <text evidence="1">Part of the 30S ribosomal subunit.</text>
</comment>
<comment type="similarity">
    <text evidence="1">Belongs to the universal ribosomal protein uS10 family.</text>
</comment>
<name>RS10_BURVG</name>
<sequence>MQQQKIRIRLKAFDYRLIDQSAAEIVDTAKRTGAIVRGPVPLPTRIQRFDILRSPHVNKTSRDQLEIRTHQRLMDIVDPTDKTVDALMKLDLPAGVDVEIKLQ</sequence>
<gene>
    <name evidence="1" type="primary">rpsJ</name>
    <name type="ordered locus">Bcep1808_0329</name>
</gene>
<dbReference type="EMBL" id="CP000614">
    <property type="protein sequence ID" value="ABO53342.1"/>
    <property type="molecule type" value="Genomic_DNA"/>
</dbReference>
<dbReference type="SMR" id="A4JAN9"/>
<dbReference type="KEGG" id="bvi:Bcep1808_0329"/>
<dbReference type="eggNOG" id="COG0051">
    <property type="taxonomic scope" value="Bacteria"/>
</dbReference>
<dbReference type="HOGENOM" id="CLU_122625_1_3_4"/>
<dbReference type="Proteomes" id="UP000002287">
    <property type="component" value="Chromosome 1"/>
</dbReference>
<dbReference type="GO" id="GO:1990904">
    <property type="term" value="C:ribonucleoprotein complex"/>
    <property type="evidence" value="ECO:0007669"/>
    <property type="project" value="UniProtKB-KW"/>
</dbReference>
<dbReference type="GO" id="GO:0005840">
    <property type="term" value="C:ribosome"/>
    <property type="evidence" value="ECO:0007669"/>
    <property type="project" value="UniProtKB-KW"/>
</dbReference>
<dbReference type="GO" id="GO:0003735">
    <property type="term" value="F:structural constituent of ribosome"/>
    <property type="evidence" value="ECO:0007669"/>
    <property type="project" value="InterPro"/>
</dbReference>
<dbReference type="GO" id="GO:0000049">
    <property type="term" value="F:tRNA binding"/>
    <property type="evidence" value="ECO:0007669"/>
    <property type="project" value="UniProtKB-UniRule"/>
</dbReference>
<dbReference type="GO" id="GO:0006412">
    <property type="term" value="P:translation"/>
    <property type="evidence" value="ECO:0007669"/>
    <property type="project" value="UniProtKB-UniRule"/>
</dbReference>
<dbReference type="FunFam" id="3.30.70.600:FF:000001">
    <property type="entry name" value="30S ribosomal protein S10"/>
    <property type="match status" value="1"/>
</dbReference>
<dbReference type="Gene3D" id="3.30.70.600">
    <property type="entry name" value="Ribosomal protein S10 domain"/>
    <property type="match status" value="1"/>
</dbReference>
<dbReference type="HAMAP" id="MF_00508">
    <property type="entry name" value="Ribosomal_uS10"/>
    <property type="match status" value="1"/>
</dbReference>
<dbReference type="InterPro" id="IPR001848">
    <property type="entry name" value="Ribosomal_uS10"/>
</dbReference>
<dbReference type="InterPro" id="IPR018268">
    <property type="entry name" value="Ribosomal_uS10_CS"/>
</dbReference>
<dbReference type="InterPro" id="IPR027486">
    <property type="entry name" value="Ribosomal_uS10_dom"/>
</dbReference>
<dbReference type="InterPro" id="IPR036838">
    <property type="entry name" value="Ribosomal_uS10_dom_sf"/>
</dbReference>
<dbReference type="NCBIfam" id="NF001861">
    <property type="entry name" value="PRK00596.1"/>
    <property type="match status" value="1"/>
</dbReference>
<dbReference type="NCBIfam" id="TIGR01049">
    <property type="entry name" value="rpsJ_bact"/>
    <property type="match status" value="1"/>
</dbReference>
<dbReference type="PANTHER" id="PTHR11700">
    <property type="entry name" value="30S RIBOSOMAL PROTEIN S10 FAMILY MEMBER"/>
    <property type="match status" value="1"/>
</dbReference>
<dbReference type="Pfam" id="PF00338">
    <property type="entry name" value="Ribosomal_S10"/>
    <property type="match status" value="1"/>
</dbReference>
<dbReference type="PRINTS" id="PR00971">
    <property type="entry name" value="RIBOSOMALS10"/>
</dbReference>
<dbReference type="SMART" id="SM01403">
    <property type="entry name" value="Ribosomal_S10"/>
    <property type="match status" value="1"/>
</dbReference>
<dbReference type="SUPFAM" id="SSF54999">
    <property type="entry name" value="Ribosomal protein S10"/>
    <property type="match status" value="1"/>
</dbReference>
<dbReference type="PROSITE" id="PS00361">
    <property type="entry name" value="RIBOSOMAL_S10"/>
    <property type="match status" value="1"/>
</dbReference>
<accession>A4JAN9</accession>
<protein>
    <recommendedName>
        <fullName evidence="1">Small ribosomal subunit protein uS10</fullName>
    </recommendedName>
    <alternativeName>
        <fullName evidence="2">30S ribosomal protein S10</fullName>
    </alternativeName>
</protein>
<reference key="1">
    <citation type="submission" date="2007-03" db="EMBL/GenBank/DDBJ databases">
        <title>Complete sequence of chromosome 1 of Burkholderia vietnamiensis G4.</title>
        <authorList>
            <consortium name="US DOE Joint Genome Institute"/>
            <person name="Copeland A."/>
            <person name="Lucas S."/>
            <person name="Lapidus A."/>
            <person name="Barry K."/>
            <person name="Detter J.C."/>
            <person name="Glavina del Rio T."/>
            <person name="Hammon N."/>
            <person name="Israni S."/>
            <person name="Dalin E."/>
            <person name="Tice H."/>
            <person name="Pitluck S."/>
            <person name="Chain P."/>
            <person name="Malfatti S."/>
            <person name="Shin M."/>
            <person name="Vergez L."/>
            <person name="Schmutz J."/>
            <person name="Larimer F."/>
            <person name="Land M."/>
            <person name="Hauser L."/>
            <person name="Kyrpides N."/>
            <person name="Tiedje J."/>
            <person name="Richardson P."/>
        </authorList>
    </citation>
    <scope>NUCLEOTIDE SEQUENCE [LARGE SCALE GENOMIC DNA]</scope>
    <source>
        <strain>G4 / LMG 22486</strain>
    </source>
</reference>
<feature type="chain" id="PRO_1000015002" description="Small ribosomal subunit protein uS10">
    <location>
        <begin position="1"/>
        <end position="103"/>
    </location>
</feature>
<organism>
    <name type="scientific">Burkholderia vietnamiensis (strain G4 / LMG 22486)</name>
    <name type="common">Burkholderia cepacia (strain R1808)</name>
    <dbReference type="NCBI Taxonomy" id="269482"/>
    <lineage>
        <taxon>Bacteria</taxon>
        <taxon>Pseudomonadati</taxon>
        <taxon>Pseudomonadota</taxon>
        <taxon>Betaproteobacteria</taxon>
        <taxon>Burkholderiales</taxon>
        <taxon>Burkholderiaceae</taxon>
        <taxon>Burkholderia</taxon>
        <taxon>Burkholderia cepacia complex</taxon>
    </lineage>
</organism>
<keyword id="KW-0687">Ribonucleoprotein</keyword>
<keyword id="KW-0689">Ribosomal protein</keyword>
<evidence type="ECO:0000255" key="1">
    <source>
        <dbReference type="HAMAP-Rule" id="MF_00508"/>
    </source>
</evidence>
<evidence type="ECO:0000305" key="2"/>